<proteinExistence type="inferred from homology"/>
<comment type="function">
    <text evidence="1">Catalyzes the attachment of isoleucine to tRNA(Ile). As IleRS can inadvertently accommodate and process structurally similar amino acids such as valine, to avoid such errors it has two additional distinct tRNA(Ile)-dependent editing activities. One activity is designated as 'pretransfer' editing and involves the hydrolysis of activated Val-AMP. The other activity is designated 'posttransfer' editing and involves deacylation of mischarged Val-tRNA(Ile).</text>
</comment>
<comment type="catalytic activity">
    <reaction evidence="1">
        <text>tRNA(Ile) + L-isoleucine + ATP = L-isoleucyl-tRNA(Ile) + AMP + diphosphate</text>
        <dbReference type="Rhea" id="RHEA:11060"/>
        <dbReference type="Rhea" id="RHEA-COMP:9666"/>
        <dbReference type="Rhea" id="RHEA-COMP:9695"/>
        <dbReference type="ChEBI" id="CHEBI:30616"/>
        <dbReference type="ChEBI" id="CHEBI:33019"/>
        <dbReference type="ChEBI" id="CHEBI:58045"/>
        <dbReference type="ChEBI" id="CHEBI:78442"/>
        <dbReference type="ChEBI" id="CHEBI:78528"/>
        <dbReference type="ChEBI" id="CHEBI:456215"/>
        <dbReference type="EC" id="6.1.1.5"/>
    </reaction>
</comment>
<comment type="cofactor">
    <cofactor evidence="1">
        <name>Zn(2+)</name>
        <dbReference type="ChEBI" id="CHEBI:29105"/>
    </cofactor>
    <text evidence="1">Binds 1 zinc ion per subunit.</text>
</comment>
<comment type="subunit">
    <text evidence="1">Monomer.</text>
</comment>
<comment type="subcellular location">
    <subcellularLocation>
        <location evidence="1">Cytoplasm</location>
    </subcellularLocation>
</comment>
<comment type="domain">
    <text evidence="1">IleRS has two distinct active sites: one for aminoacylation and one for editing. The misactivated valine is translocated from the active site to the editing site, which sterically excludes the correctly activated isoleucine. The single editing site contains two valyl binding pockets, one specific for each substrate (Val-AMP or Val-tRNA(Ile)).</text>
</comment>
<comment type="similarity">
    <text evidence="1">Belongs to the class-I aminoacyl-tRNA synthetase family. IleS type 1 subfamily.</text>
</comment>
<name>SYI_PARP8</name>
<accession>B2JDY9</accession>
<protein>
    <recommendedName>
        <fullName evidence="1">Isoleucine--tRNA ligase</fullName>
        <ecNumber evidence="1">6.1.1.5</ecNumber>
    </recommendedName>
    <alternativeName>
        <fullName evidence="1">Isoleucyl-tRNA synthetase</fullName>
        <shortName evidence="1">IleRS</shortName>
    </alternativeName>
</protein>
<feature type="chain" id="PRO_1000189139" description="Isoleucine--tRNA ligase">
    <location>
        <begin position="1"/>
        <end position="945"/>
    </location>
</feature>
<feature type="short sequence motif" description="'HIGH' region">
    <location>
        <begin position="66"/>
        <end position="76"/>
    </location>
</feature>
<feature type="short sequence motif" description="'KMSKS' region">
    <location>
        <begin position="622"/>
        <end position="626"/>
    </location>
</feature>
<feature type="binding site" evidence="1">
    <location>
        <position position="581"/>
    </location>
    <ligand>
        <name>L-isoleucyl-5'-AMP</name>
        <dbReference type="ChEBI" id="CHEBI:178002"/>
    </ligand>
</feature>
<feature type="binding site" evidence="1">
    <location>
        <position position="625"/>
    </location>
    <ligand>
        <name>ATP</name>
        <dbReference type="ChEBI" id="CHEBI:30616"/>
    </ligand>
</feature>
<feature type="binding site" evidence="1">
    <location>
        <position position="908"/>
    </location>
    <ligand>
        <name>Zn(2+)</name>
        <dbReference type="ChEBI" id="CHEBI:29105"/>
    </ligand>
</feature>
<feature type="binding site" evidence="1">
    <location>
        <position position="911"/>
    </location>
    <ligand>
        <name>Zn(2+)</name>
        <dbReference type="ChEBI" id="CHEBI:29105"/>
    </ligand>
</feature>
<feature type="binding site" evidence="1">
    <location>
        <position position="928"/>
    </location>
    <ligand>
        <name>Zn(2+)</name>
        <dbReference type="ChEBI" id="CHEBI:29105"/>
    </ligand>
</feature>
<feature type="binding site" evidence="1">
    <location>
        <position position="931"/>
    </location>
    <ligand>
        <name>Zn(2+)</name>
        <dbReference type="ChEBI" id="CHEBI:29105"/>
    </ligand>
</feature>
<organism>
    <name type="scientific">Paraburkholderia phymatum (strain DSM 17167 / CIP 108236 / LMG 21445 / STM815)</name>
    <name type="common">Burkholderia phymatum</name>
    <dbReference type="NCBI Taxonomy" id="391038"/>
    <lineage>
        <taxon>Bacteria</taxon>
        <taxon>Pseudomonadati</taxon>
        <taxon>Pseudomonadota</taxon>
        <taxon>Betaproteobacteria</taxon>
        <taxon>Burkholderiales</taxon>
        <taxon>Burkholderiaceae</taxon>
        <taxon>Paraburkholderia</taxon>
    </lineage>
</organism>
<dbReference type="EC" id="6.1.1.5" evidence="1"/>
<dbReference type="EMBL" id="CP001043">
    <property type="protein sequence ID" value="ACC69765.1"/>
    <property type="molecule type" value="Genomic_DNA"/>
</dbReference>
<dbReference type="RefSeq" id="WP_012399988.1">
    <property type="nucleotide sequence ID" value="NC_010622.1"/>
</dbReference>
<dbReference type="SMR" id="B2JDY9"/>
<dbReference type="STRING" id="391038.Bphy_0574"/>
<dbReference type="KEGG" id="bph:Bphy_0574"/>
<dbReference type="eggNOG" id="COG0060">
    <property type="taxonomic scope" value="Bacteria"/>
</dbReference>
<dbReference type="HOGENOM" id="CLU_001493_7_1_4"/>
<dbReference type="OrthoDB" id="9810365at2"/>
<dbReference type="Proteomes" id="UP000001192">
    <property type="component" value="Chromosome 1"/>
</dbReference>
<dbReference type="GO" id="GO:0005829">
    <property type="term" value="C:cytosol"/>
    <property type="evidence" value="ECO:0007669"/>
    <property type="project" value="TreeGrafter"/>
</dbReference>
<dbReference type="GO" id="GO:0002161">
    <property type="term" value="F:aminoacyl-tRNA deacylase activity"/>
    <property type="evidence" value="ECO:0007669"/>
    <property type="project" value="InterPro"/>
</dbReference>
<dbReference type="GO" id="GO:0005524">
    <property type="term" value="F:ATP binding"/>
    <property type="evidence" value="ECO:0007669"/>
    <property type="project" value="UniProtKB-UniRule"/>
</dbReference>
<dbReference type="GO" id="GO:0004822">
    <property type="term" value="F:isoleucine-tRNA ligase activity"/>
    <property type="evidence" value="ECO:0007669"/>
    <property type="project" value="UniProtKB-UniRule"/>
</dbReference>
<dbReference type="GO" id="GO:0000049">
    <property type="term" value="F:tRNA binding"/>
    <property type="evidence" value="ECO:0007669"/>
    <property type="project" value="InterPro"/>
</dbReference>
<dbReference type="GO" id="GO:0008270">
    <property type="term" value="F:zinc ion binding"/>
    <property type="evidence" value="ECO:0007669"/>
    <property type="project" value="UniProtKB-UniRule"/>
</dbReference>
<dbReference type="GO" id="GO:0006428">
    <property type="term" value="P:isoleucyl-tRNA aminoacylation"/>
    <property type="evidence" value="ECO:0007669"/>
    <property type="project" value="UniProtKB-UniRule"/>
</dbReference>
<dbReference type="CDD" id="cd07960">
    <property type="entry name" value="Anticodon_Ia_Ile_BEm"/>
    <property type="match status" value="1"/>
</dbReference>
<dbReference type="CDD" id="cd00818">
    <property type="entry name" value="IleRS_core"/>
    <property type="match status" value="1"/>
</dbReference>
<dbReference type="FunFam" id="3.40.50.620:FF:000042">
    <property type="entry name" value="Isoleucine--tRNA ligase"/>
    <property type="match status" value="1"/>
</dbReference>
<dbReference type="FunFam" id="3.40.50.620:FF:000048">
    <property type="entry name" value="Isoleucine--tRNA ligase"/>
    <property type="match status" value="1"/>
</dbReference>
<dbReference type="Gene3D" id="1.10.730.20">
    <property type="match status" value="1"/>
</dbReference>
<dbReference type="Gene3D" id="3.40.50.620">
    <property type="entry name" value="HUPs"/>
    <property type="match status" value="2"/>
</dbReference>
<dbReference type="Gene3D" id="3.90.740.10">
    <property type="entry name" value="Valyl/Leucyl/Isoleucyl-tRNA synthetase, editing domain"/>
    <property type="match status" value="1"/>
</dbReference>
<dbReference type="HAMAP" id="MF_02002">
    <property type="entry name" value="Ile_tRNA_synth_type1"/>
    <property type="match status" value="1"/>
</dbReference>
<dbReference type="InterPro" id="IPR001412">
    <property type="entry name" value="aa-tRNA-synth_I_CS"/>
</dbReference>
<dbReference type="InterPro" id="IPR002300">
    <property type="entry name" value="aa-tRNA-synth_Ia"/>
</dbReference>
<dbReference type="InterPro" id="IPR033708">
    <property type="entry name" value="Anticodon_Ile_BEm"/>
</dbReference>
<dbReference type="InterPro" id="IPR002301">
    <property type="entry name" value="Ile-tRNA-ligase"/>
</dbReference>
<dbReference type="InterPro" id="IPR023585">
    <property type="entry name" value="Ile-tRNA-ligase_type1"/>
</dbReference>
<dbReference type="InterPro" id="IPR050081">
    <property type="entry name" value="Ile-tRNA_ligase"/>
</dbReference>
<dbReference type="InterPro" id="IPR013155">
    <property type="entry name" value="M/V/L/I-tRNA-synth_anticd-bd"/>
</dbReference>
<dbReference type="InterPro" id="IPR014729">
    <property type="entry name" value="Rossmann-like_a/b/a_fold"/>
</dbReference>
<dbReference type="InterPro" id="IPR009080">
    <property type="entry name" value="tRNAsynth_Ia_anticodon-bd"/>
</dbReference>
<dbReference type="InterPro" id="IPR009008">
    <property type="entry name" value="Val/Leu/Ile-tRNA-synth_edit"/>
</dbReference>
<dbReference type="InterPro" id="IPR010663">
    <property type="entry name" value="Znf_FPG/IleRS"/>
</dbReference>
<dbReference type="NCBIfam" id="TIGR00392">
    <property type="entry name" value="ileS"/>
    <property type="match status" value="1"/>
</dbReference>
<dbReference type="PANTHER" id="PTHR42765:SF1">
    <property type="entry name" value="ISOLEUCINE--TRNA LIGASE, MITOCHONDRIAL"/>
    <property type="match status" value="1"/>
</dbReference>
<dbReference type="PANTHER" id="PTHR42765">
    <property type="entry name" value="SOLEUCYL-TRNA SYNTHETASE"/>
    <property type="match status" value="1"/>
</dbReference>
<dbReference type="Pfam" id="PF08264">
    <property type="entry name" value="Anticodon_1"/>
    <property type="match status" value="1"/>
</dbReference>
<dbReference type="Pfam" id="PF00133">
    <property type="entry name" value="tRNA-synt_1"/>
    <property type="match status" value="1"/>
</dbReference>
<dbReference type="Pfam" id="PF06827">
    <property type="entry name" value="zf-FPG_IleRS"/>
    <property type="match status" value="1"/>
</dbReference>
<dbReference type="PRINTS" id="PR00984">
    <property type="entry name" value="TRNASYNTHILE"/>
</dbReference>
<dbReference type="SUPFAM" id="SSF47323">
    <property type="entry name" value="Anticodon-binding domain of a subclass of class I aminoacyl-tRNA synthetases"/>
    <property type="match status" value="1"/>
</dbReference>
<dbReference type="SUPFAM" id="SSF52374">
    <property type="entry name" value="Nucleotidylyl transferase"/>
    <property type="match status" value="1"/>
</dbReference>
<dbReference type="SUPFAM" id="SSF50677">
    <property type="entry name" value="ValRS/IleRS/LeuRS editing domain"/>
    <property type="match status" value="1"/>
</dbReference>
<dbReference type="PROSITE" id="PS00178">
    <property type="entry name" value="AA_TRNA_LIGASE_I"/>
    <property type="match status" value="1"/>
</dbReference>
<gene>
    <name evidence="1" type="primary">ileS</name>
    <name type="ordered locus">Bphy_0574</name>
</gene>
<keyword id="KW-0030">Aminoacyl-tRNA synthetase</keyword>
<keyword id="KW-0067">ATP-binding</keyword>
<keyword id="KW-0963">Cytoplasm</keyword>
<keyword id="KW-0436">Ligase</keyword>
<keyword id="KW-0479">Metal-binding</keyword>
<keyword id="KW-0547">Nucleotide-binding</keyword>
<keyword id="KW-0648">Protein biosynthesis</keyword>
<keyword id="KW-1185">Reference proteome</keyword>
<keyword id="KW-0862">Zinc</keyword>
<sequence length="945" mass="105999">MSNKKADSKPQARYPVNLLDTPFPMRGDLPRREPQWVKDWQERKIYEKIRAASKGRKKFILHDGPPYANGDIHLGHAVNKILKDMIVKARNLAGFDAVYVPGWDCHGMPIEIQIEKQFGKSLPAAEVMQKARAYATEQIEKQKAGFRRLGVLGDWDNPYKTMNFANEAGEIRALAKIMEKGYVFRGLKPVNWCFDCGSALAEAEVEYKDKTDPTIDVMFTFADPEKTAHAFGLAALPRNEGGIVIWTTTPWTIPANQALNLHPEIVYALVDTPRGLLILAEERVEACLKSYGIAGTVIATAPGAKLANLRFNHPLASAHPSYKRTSPVYLGDYVTTETGTGIVHSSPAYGVEDFISCKTHGMADSDILSPVMGDGRYIESLALFGGLSIWDANPKIVEALDEAGTLLRTEKYLHSYMHCWRHKTPIIYRATSQWFAGMDIKPNDSDKTLRETALEGIEATAFYPSWGKQRLFAMIANRPDWTLSRQRQWGVPMAFFVHKETGELHPRTLELLEEVAKRVEVSGIEAWQTLDPRELIGDDANMYEKNRDTLDVWFDSGTTHWHVLRGSHKDELQFPADLYLEGSDQHRGWFHSSLLTASMLDGRPPYNALLTHGFTVDGEGRKMSKSLGNGIDPHEVSNRLGAEIIRLWIASTDYSGELAISEEILKRVTESYRRIRNTLRFLLANLSDFDIGKHARPVGEWLEIDRYAVALTANLQADILSHYDRYEFHPVVAKLQTFCSEDLGGFYLDVLKDRLYTTAADSKARRSAQTALYHIAHGLLRLMAPFLSFTAEEAWKVFQPQSETIYTETYHAYPDVPEASTLLDKWTLLRAVRSDVTKALEEARVANQIGSSLQAEVEIRAAGARHDALASLGADLKFVLITSGATVVKVDSVDEEGVDVITSKYLKCERCWHYRKDVGESAEHPTLCGRCISNLFGNGETRSAA</sequence>
<evidence type="ECO:0000255" key="1">
    <source>
        <dbReference type="HAMAP-Rule" id="MF_02002"/>
    </source>
</evidence>
<reference key="1">
    <citation type="journal article" date="2014" name="Stand. Genomic Sci.">
        <title>Complete genome sequence of Burkholderia phymatum STM815(T), a broad host range and efficient nitrogen-fixing symbiont of Mimosa species.</title>
        <authorList>
            <person name="Moulin L."/>
            <person name="Klonowska A."/>
            <person name="Caroline B."/>
            <person name="Booth K."/>
            <person name="Vriezen J.A."/>
            <person name="Melkonian R."/>
            <person name="James E.K."/>
            <person name="Young J.P."/>
            <person name="Bena G."/>
            <person name="Hauser L."/>
            <person name="Land M."/>
            <person name="Kyrpides N."/>
            <person name="Bruce D."/>
            <person name="Chain P."/>
            <person name="Copeland A."/>
            <person name="Pitluck S."/>
            <person name="Woyke T."/>
            <person name="Lizotte-Waniewski M."/>
            <person name="Bristow J."/>
            <person name="Riley M."/>
        </authorList>
    </citation>
    <scope>NUCLEOTIDE SEQUENCE [LARGE SCALE GENOMIC DNA]</scope>
    <source>
        <strain>DSM 17167 / CIP 108236 / LMG 21445 / STM815</strain>
    </source>
</reference>